<gene>
    <name evidence="1" type="primary">rpsK</name>
    <name evidence="1" type="synonym">rps11</name>
    <name type="ordered locus">SynWH7803_0412</name>
</gene>
<proteinExistence type="inferred from homology"/>
<feature type="chain" id="PRO_1000051859" description="Small ribosomal subunit protein uS11">
    <location>
        <begin position="1"/>
        <end position="130"/>
    </location>
</feature>
<name>RS11_SYNPW</name>
<reference key="1">
    <citation type="submission" date="2006-05" db="EMBL/GenBank/DDBJ databases">
        <authorList>
            <consortium name="Genoscope"/>
        </authorList>
    </citation>
    <scope>NUCLEOTIDE SEQUENCE [LARGE SCALE GENOMIC DNA]</scope>
    <source>
        <strain>WH7803</strain>
    </source>
</reference>
<protein>
    <recommendedName>
        <fullName evidence="1">Small ribosomal subunit protein uS11</fullName>
    </recommendedName>
    <alternativeName>
        <fullName evidence="2">30S ribosomal protein S11</fullName>
    </alternativeName>
</protein>
<organism>
    <name type="scientific">Synechococcus sp. (strain WH7803)</name>
    <dbReference type="NCBI Taxonomy" id="32051"/>
    <lineage>
        <taxon>Bacteria</taxon>
        <taxon>Bacillati</taxon>
        <taxon>Cyanobacteriota</taxon>
        <taxon>Cyanophyceae</taxon>
        <taxon>Synechococcales</taxon>
        <taxon>Synechococcaceae</taxon>
        <taxon>Synechococcus</taxon>
    </lineage>
</organism>
<dbReference type="EMBL" id="CT971583">
    <property type="protein sequence ID" value="CAK22838.1"/>
    <property type="molecule type" value="Genomic_DNA"/>
</dbReference>
<dbReference type="SMR" id="A5GIS3"/>
<dbReference type="STRING" id="32051.SynWH7803_0412"/>
<dbReference type="KEGG" id="syx:SynWH7803_0412"/>
<dbReference type="eggNOG" id="COG0100">
    <property type="taxonomic scope" value="Bacteria"/>
</dbReference>
<dbReference type="HOGENOM" id="CLU_072439_5_0_3"/>
<dbReference type="OrthoDB" id="9806415at2"/>
<dbReference type="Proteomes" id="UP000001566">
    <property type="component" value="Chromosome"/>
</dbReference>
<dbReference type="GO" id="GO:1990904">
    <property type="term" value="C:ribonucleoprotein complex"/>
    <property type="evidence" value="ECO:0007669"/>
    <property type="project" value="UniProtKB-KW"/>
</dbReference>
<dbReference type="GO" id="GO:0005840">
    <property type="term" value="C:ribosome"/>
    <property type="evidence" value="ECO:0007669"/>
    <property type="project" value="UniProtKB-KW"/>
</dbReference>
<dbReference type="GO" id="GO:0019843">
    <property type="term" value="F:rRNA binding"/>
    <property type="evidence" value="ECO:0007669"/>
    <property type="project" value="UniProtKB-UniRule"/>
</dbReference>
<dbReference type="GO" id="GO:0003735">
    <property type="term" value="F:structural constituent of ribosome"/>
    <property type="evidence" value="ECO:0007669"/>
    <property type="project" value="InterPro"/>
</dbReference>
<dbReference type="GO" id="GO:0006412">
    <property type="term" value="P:translation"/>
    <property type="evidence" value="ECO:0007669"/>
    <property type="project" value="UniProtKB-UniRule"/>
</dbReference>
<dbReference type="FunFam" id="3.30.420.80:FF:000001">
    <property type="entry name" value="30S ribosomal protein S11"/>
    <property type="match status" value="1"/>
</dbReference>
<dbReference type="Gene3D" id="3.30.420.80">
    <property type="entry name" value="Ribosomal protein S11"/>
    <property type="match status" value="1"/>
</dbReference>
<dbReference type="HAMAP" id="MF_01310">
    <property type="entry name" value="Ribosomal_uS11"/>
    <property type="match status" value="1"/>
</dbReference>
<dbReference type="InterPro" id="IPR001971">
    <property type="entry name" value="Ribosomal_uS11"/>
</dbReference>
<dbReference type="InterPro" id="IPR019981">
    <property type="entry name" value="Ribosomal_uS11_bac-type"/>
</dbReference>
<dbReference type="InterPro" id="IPR018102">
    <property type="entry name" value="Ribosomal_uS11_CS"/>
</dbReference>
<dbReference type="InterPro" id="IPR036967">
    <property type="entry name" value="Ribosomal_uS11_sf"/>
</dbReference>
<dbReference type="NCBIfam" id="NF003698">
    <property type="entry name" value="PRK05309.1"/>
    <property type="match status" value="1"/>
</dbReference>
<dbReference type="NCBIfam" id="TIGR03632">
    <property type="entry name" value="uS11_bact"/>
    <property type="match status" value="1"/>
</dbReference>
<dbReference type="PANTHER" id="PTHR11759">
    <property type="entry name" value="40S RIBOSOMAL PROTEIN S14/30S RIBOSOMAL PROTEIN S11"/>
    <property type="match status" value="1"/>
</dbReference>
<dbReference type="Pfam" id="PF00411">
    <property type="entry name" value="Ribosomal_S11"/>
    <property type="match status" value="1"/>
</dbReference>
<dbReference type="PIRSF" id="PIRSF002131">
    <property type="entry name" value="Ribosomal_S11"/>
    <property type="match status" value="1"/>
</dbReference>
<dbReference type="SUPFAM" id="SSF53137">
    <property type="entry name" value="Translational machinery components"/>
    <property type="match status" value="1"/>
</dbReference>
<dbReference type="PROSITE" id="PS00054">
    <property type="entry name" value="RIBOSOMAL_S11"/>
    <property type="match status" value="1"/>
</dbReference>
<keyword id="KW-1185">Reference proteome</keyword>
<keyword id="KW-0687">Ribonucleoprotein</keyword>
<keyword id="KW-0689">Ribosomal protein</keyword>
<keyword id="KW-0694">RNA-binding</keyword>
<keyword id="KW-0699">rRNA-binding</keyword>
<evidence type="ECO:0000255" key="1">
    <source>
        <dbReference type="HAMAP-Rule" id="MF_01310"/>
    </source>
</evidence>
<evidence type="ECO:0000305" key="2"/>
<comment type="function">
    <text evidence="1">Located on the platform of the 30S subunit, it bridges several disparate RNA helices of the 16S rRNA. Forms part of the Shine-Dalgarno cleft in the 70S ribosome.</text>
</comment>
<comment type="subunit">
    <text evidence="1">Part of the 30S ribosomal subunit. Interacts with proteins S7 and S18. Binds to IF-3.</text>
</comment>
<comment type="similarity">
    <text evidence="1">Belongs to the universal ribosomal protein uS11 family.</text>
</comment>
<accession>A5GIS3</accession>
<sequence length="130" mass="13842">MAKTVKKSGPKKAKRNVPNGVAHIQSTFNNTIVSITDTTGEVISWSSAGASGFKGARKGTPFAAQTAAEAAARRALDQGMRQIEVLVRGPGSGRETAIRALQVAGLEITLIRDVTPLPHNGCRRPKRRRV</sequence>